<organism>
    <name type="scientific">Streptomyces avermitilis (strain ATCC 31267 / DSM 46492 / JCM 5070 / NBRC 14893 / NCIMB 12804 / NRRL 8165 / MA-4680)</name>
    <dbReference type="NCBI Taxonomy" id="227882"/>
    <lineage>
        <taxon>Bacteria</taxon>
        <taxon>Bacillati</taxon>
        <taxon>Actinomycetota</taxon>
        <taxon>Actinomycetes</taxon>
        <taxon>Kitasatosporales</taxon>
        <taxon>Streptomycetaceae</taxon>
        <taxon>Streptomyces</taxon>
    </lineage>
</organism>
<reference key="1">
    <citation type="journal article" date="2001" name="Proc. Natl. Acad. Sci. U.S.A.">
        <title>Genome sequence of an industrial microorganism Streptomyces avermitilis: deducing the ability of producing secondary metabolites.</title>
        <authorList>
            <person name="Omura S."/>
            <person name="Ikeda H."/>
            <person name="Ishikawa J."/>
            <person name="Hanamoto A."/>
            <person name="Takahashi C."/>
            <person name="Shinose M."/>
            <person name="Takahashi Y."/>
            <person name="Horikawa H."/>
            <person name="Nakazawa H."/>
            <person name="Osonoe T."/>
            <person name="Kikuchi H."/>
            <person name="Shiba T."/>
            <person name="Sakaki Y."/>
            <person name="Hattori M."/>
        </authorList>
    </citation>
    <scope>NUCLEOTIDE SEQUENCE [LARGE SCALE GENOMIC DNA]</scope>
    <source>
        <strain>ATCC 31267 / DSM 46492 / JCM 5070 / NBRC 14893 / NCIMB 12804 / NRRL 8165 / MA-4680</strain>
    </source>
</reference>
<reference key="2">
    <citation type="journal article" date="2003" name="Nat. Biotechnol.">
        <title>Complete genome sequence and comparative analysis of the industrial microorganism Streptomyces avermitilis.</title>
        <authorList>
            <person name="Ikeda H."/>
            <person name="Ishikawa J."/>
            <person name="Hanamoto A."/>
            <person name="Shinose M."/>
            <person name="Kikuchi H."/>
            <person name="Shiba T."/>
            <person name="Sakaki Y."/>
            <person name="Hattori M."/>
            <person name="Omura S."/>
        </authorList>
    </citation>
    <scope>NUCLEOTIDE SEQUENCE [LARGE SCALE GENOMIC DNA]</scope>
    <source>
        <strain>ATCC 31267 / DSM 46492 / JCM 5070 / NBRC 14893 / NCIMB 12804 / NRRL 8165 / MA-4680</strain>
    </source>
</reference>
<comment type="function">
    <text evidence="1">NDH-1 shuttles electrons from NADH, via FMN and iron-sulfur (Fe-S) centers, to quinones in the respiratory chain. The immediate electron acceptor for the enzyme in this species is believed to be a menaquinone. Couples the redox reaction to proton translocation (for every two electrons transferred, four hydrogen ions are translocated across the cytoplasmic membrane), and thus conserves the redox energy in a proton gradient.</text>
</comment>
<comment type="catalytic activity">
    <reaction>
        <text>a quinone + NADH + 5 H(+)(in) = a quinol + NAD(+) + 4 H(+)(out)</text>
        <dbReference type="Rhea" id="RHEA:57888"/>
        <dbReference type="ChEBI" id="CHEBI:15378"/>
        <dbReference type="ChEBI" id="CHEBI:24646"/>
        <dbReference type="ChEBI" id="CHEBI:57540"/>
        <dbReference type="ChEBI" id="CHEBI:57945"/>
        <dbReference type="ChEBI" id="CHEBI:132124"/>
    </reaction>
</comment>
<comment type="cofactor">
    <cofactor evidence="1">
        <name>[4Fe-4S] cluster</name>
        <dbReference type="ChEBI" id="CHEBI:49883"/>
    </cofactor>
    <text evidence="1">Binds 1 [4Fe-4S] cluster.</text>
</comment>
<comment type="subunit">
    <text evidence="1">NDH-1 is composed of 14 different subunits. Subunits NuoB, C, D, E, F, and G constitute the peripheral sector of the complex (By similarity).</text>
</comment>
<comment type="subcellular location">
    <subcellularLocation>
        <location evidence="1">Cell membrane</location>
        <topology evidence="1">Peripheral membrane protein</topology>
        <orientation evidence="1">Cytoplasmic side</orientation>
    </subcellularLocation>
</comment>
<comment type="similarity">
    <text evidence="3">Belongs to the complex I 20 kDa subunit family.</text>
</comment>
<name>NUOB2_STRAW</name>
<accession>Q82DT6</accession>
<gene>
    <name type="primary">nuoB2</name>
    <name type="ordered locus">SAV_4882</name>
</gene>
<feature type="chain" id="PRO_0000376386" description="NADH-quinone oxidoreductase subunit B 2">
    <location>
        <begin position="1"/>
        <end position="203"/>
    </location>
</feature>
<feature type="region of interest" description="Disordered" evidence="2">
    <location>
        <begin position="167"/>
        <end position="203"/>
    </location>
</feature>
<feature type="compositionally biased region" description="Gly residues" evidence="2">
    <location>
        <begin position="193"/>
        <end position="203"/>
    </location>
</feature>
<feature type="binding site" evidence="1">
    <location>
        <position position="48"/>
    </location>
    <ligand>
        <name>[4Fe-4S] cluster</name>
        <dbReference type="ChEBI" id="CHEBI:49883"/>
    </ligand>
</feature>
<feature type="binding site" evidence="1">
    <location>
        <position position="49"/>
    </location>
    <ligand>
        <name>[4Fe-4S] cluster</name>
        <dbReference type="ChEBI" id="CHEBI:49883"/>
    </ligand>
</feature>
<feature type="binding site" evidence="1">
    <location>
        <position position="114"/>
    </location>
    <ligand>
        <name>[4Fe-4S] cluster</name>
        <dbReference type="ChEBI" id="CHEBI:49883"/>
    </ligand>
</feature>
<feature type="binding site" evidence="1">
    <location>
        <position position="144"/>
    </location>
    <ligand>
        <name>[4Fe-4S] cluster</name>
        <dbReference type="ChEBI" id="CHEBI:49883"/>
    </ligand>
</feature>
<proteinExistence type="inferred from homology"/>
<keyword id="KW-0004">4Fe-4S</keyword>
<keyword id="KW-1003">Cell membrane</keyword>
<keyword id="KW-0408">Iron</keyword>
<keyword id="KW-0411">Iron-sulfur</keyword>
<keyword id="KW-0472">Membrane</keyword>
<keyword id="KW-0479">Metal-binding</keyword>
<keyword id="KW-0520">NAD</keyword>
<keyword id="KW-0874">Quinone</keyword>
<keyword id="KW-1185">Reference proteome</keyword>
<keyword id="KW-1278">Translocase</keyword>
<keyword id="KW-0813">Transport</keyword>
<dbReference type="EC" id="7.1.1.-"/>
<dbReference type="EMBL" id="BA000030">
    <property type="protein sequence ID" value="BAC72594.1"/>
    <property type="molecule type" value="Genomic_DNA"/>
</dbReference>
<dbReference type="RefSeq" id="WP_010986302.1">
    <property type="nucleotide sequence ID" value="NZ_JZJK01000077.1"/>
</dbReference>
<dbReference type="SMR" id="Q82DT6"/>
<dbReference type="GeneID" id="41541962"/>
<dbReference type="KEGG" id="sma:SAVERM_4882"/>
<dbReference type="eggNOG" id="COG0377">
    <property type="taxonomic scope" value="Bacteria"/>
</dbReference>
<dbReference type="HOGENOM" id="CLU_055737_4_1_11"/>
<dbReference type="OrthoDB" id="9786737at2"/>
<dbReference type="Proteomes" id="UP000000428">
    <property type="component" value="Chromosome"/>
</dbReference>
<dbReference type="GO" id="GO:0005886">
    <property type="term" value="C:plasma membrane"/>
    <property type="evidence" value="ECO:0007669"/>
    <property type="project" value="UniProtKB-SubCell"/>
</dbReference>
<dbReference type="GO" id="GO:0045271">
    <property type="term" value="C:respiratory chain complex I"/>
    <property type="evidence" value="ECO:0007669"/>
    <property type="project" value="TreeGrafter"/>
</dbReference>
<dbReference type="GO" id="GO:0051539">
    <property type="term" value="F:4 iron, 4 sulfur cluster binding"/>
    <property type="evidence" value="ECO:0007669"/>
    <property type="project" value="UniProtKB-KW"/>
</dbReference>
<dbReference type="GO" id="GO:0005506">
    <property type="term" value="F:iron ion binding"/>
    <property type="evidence" value="ECO:0007669"/>
    <property type="project" value="UniProtKB-UniRule"/>
</dbReference>
<dbReference type="GO" id="GO:0008137">
    <property type="term" value="F:NADH dehydrogenase (ubiquinone) activity"/>
    <property type="evidence" value="ECO:0007669"/>
    <property type="project" value="InterPro"/>
</dbReference>
<dbReference type="GO" id="GO:0050136">
    <property type="term" value="F:NADH:ubiquinone reductase (non-electrogenic) activity"/>
    <property type="evidence" value="ECO:0007669"/>
    <property type="project" value="UniProtKB-UniRule"/>
</dbReference>
<dbReference type="GO" id="GO:0048038">
    <property type="term" value="F:quinone binding"/>
    <property type="evidence" value="ECO:0007669"/>
    <property type="project" value="UniProtKB-KW"/>
</dbReference>
<dbReference type="GO" id="GO:0009060">
    <property type="term" value="P:aerobic respiration"/>
    <property type="evidence" value="ECO:0007669"/>
    <property type="project" value="TreeGrafter"/>
</dbReference>
<dbReference type="GO" id="GO:0015990">
    <property type="term" value="P:electron transport coupled proton transport"/>
    <property type="evidence" value="ECO:0007669"/>
    <property type="project" value="TreeGrafter"/>
</dbReference>
<dbReference type="FunFam" id="3.40.50.12280:FF:000002">
    <property type="entry name" value="NADH-quinone oxidoreductase subunit B"/>
    <property type="match status" value="1"/>
</dbReference>
<dbReference type="Gene3D" id="3.40.50.12280">
    <property type="match status" value="1"/>
</dbReference>
<dbReference type="HAMAP" id="MF_01356">
    <property type="entry name" value="NDH1_NuoB"/>
    <property type="match status" value="1"/>
</dbReference>
<dbReference type="InterPro" id="IPR006137">
    <property type="entry name" value="NADH_UbQ_OxRdtase-like_20kDa"/>
</dbReference>
<dbReference type="InterPro" id="IPR006138">
    <property type="entry name" value="NADH_UQ_OxRdtase_20Kd_su"/>
</dbReference>
<dbReference type="NCBIfam" id="TIGR01957">
    <property type="entry name" value="nuoB_fam"/>
    <property type="match status" value="1"/>
</dbReference>
<dbReference type="NCBIfam" id="NF005012">
    <property type="entry name" value="PRK06411.1"/>
    <property type="match status" value="1"/>
</dbReference>
<dbReference type="PANTHER" id="PTHR11995">
    <property type="entry name" value="NADH DEHYDROGENASE"/>
    <property type="match status" value="1"/>
</dbReference>
<dbReference type="PANTHER" id="PTHR11995:SF33">
    <property type="entry name" value="NADH-QUINONE OXIDOREDUCTASE SUBUNIT B 2"/>
    <property type="match status" value="1"/>
</dbReference>
<dbReference type="Pfam" id="PF01058">
    <property type="entry name" value="Oxidored_q6"/>
    <property type="match status" value="1"/>
</dbReference>
<dbReference type="SUPFAM" id="SSF56770">
    <property type="entry name" value="HydA/Nqo6-like"/>
    <property type="match status" value="1"/>
</dbReference>
<evidence type="ECO:0000250" key="1"/>
<evidence type="ECO:0000256" key="2">
    <source>
        <dbReference type="SAM" id="MobiDB-lite"/>
    </source>
</evidence>
<evidence type="ECO:0000305" key="3"/>
<sequence>MDVTPEPVLLPEPKRLGALARLAPEPMKVVLNWGRRYSLWVFNFGLACCAIEFIAASMARHDFIRLGVIPFAPGPRQADLMVVSGTVTDKMAPAVKRLYEQMPEPKYVISFGACSNCGGPYWDSYSVTKGVDQIIPVDVYVPGCPPRPEALLQGILKLQEKIARESLSERYGSPRPSAAALQSDLVRPPAAGTGAGTAEGGAR</sequence>
<protein>
    <recommendedName>
        <fullName>NADH-quinone oxidoreductase subunit B 2</fullName>
        <ecNumber>7.1.1.-</ecNumber>
    </recommendedName>
    <alternativeName>
        <fullName>NADH dehydrogenase I subunit B 2</fullName>
    </alternativeName>
    <alternativeName>
        <fullName>NDH-1 subunit B 2</fullName>
    </alternativeName>
</protein>